<organism>
    <name type="scientific">Streptococcus pneumoniae (strain ATCC 700669 / Spain 23F-1)</name>
    <dbReference type="NCBI Taxonomy" id="561276"/>
    <lineage>
        <taxon>Bacteria</taxon>
        <taxon>Bacillati</taxon>
        <taxon>Bacillota</taxon>
        <taxon>Bacilli</taxon>
        <taxon>Lactobacillales</taxon>
        <taxon>Streptococcaceae</taxon>
        <taxon>Streptococcus</taxon>
    </lineage>
</organism>
<feature type="chain" id="PRO_1000185207" description="UPF0346 protein SPN23F08690">
    <location>
        <begin position="1"/>
        <end position="71"/>
    </location>
</feature>
<name>Y869_STRPJ</name>
<accession>B8ZP47</accession>
<gene>
    <name type="ordered locus">SPN23F08690</name>
</gene>
<comment type="similarity">
    <text evidence="1">Belongs to the UPF0346 family.</text>
</comment>
<dbReference type="EMBL" id="FM211187">
    <property type="protein sequence ID" value="CAR68700.1"/>
    <property type="molecule type" value="Genomic_DNA"/>
</dbReference>
<dbReference type="RefSeq" id="WP_001232085.1">
    <property type="nucleotide sequence ID" value="NC_011900.1"/>
</dbReference>
<dbReference type="SMR" id="B8ZP47"/>
<dbReference type="KEGG" id="sne:SPN23F08690"/>
<dbReference type="HOGENOM" id="CLU_177534_1_0_9"/>
<dbReference type="Gene3D" id="1.10.150.260">
    <property type="entry name" value="YozE SAM-like"/>
    <property type="match status" value="1"/>
</dbReference>
<dbReference type="HAMAP" id="MF_01538">
    <property type="entry name" value="UPF0346"/>
    <property type="match status" value="1"/>
</dbReference>
<dbReference type="InterPro" id="IPR010673">
    <property type="entry name" value="UPF0346"/>
</dbReference>
<dbReference type="InterPro" id="IPR023089">
    <property type="entry name" value="YozE_SAM-like"/>
</dbReference>
<dbReference type="InterPro" id="IPR036806">
    <property type="entry name" value="YozE_SAM-like_sf"/>
</dbReference>
<dbReference type="NCBIfam" id="NF010193">
    <property type="entry name" value="PRK13672.1"/>
    <property type="match status" value="1"/>
</dbReference>
<dbReference type="Pfam" id="PF06855">
    <property type="entry name" value="YozE_SAM_like"/>
    <property type="match status" value="1"/>
</dbReference>
<dbReference type="PIRSF" id="PIRSF037262">
    <property type="entry name" value="UCP037262"/>
    <property type="match status" value="1"/>
</dbReference>
<dbReference type="SUPFAM" id="SSF140652">
    <property type="entry name" value="YozE-like"/>
    <property type="match status" value="1"/>
</dbReference>
<evidence type="ECO:0000255" key="1">
    <source>
        <dbReference type="HAMAP-Rule" id="MF_01538"/>
    </source>
</evidence>
<protein>
    <recommendedName>
        <fullName evidence="1">UPF0346 protein SPN23F08690</fullName>
    </recommendedName>
</protein>
<proteinExistence type="inferred from homology"/>
<sequence length="71" mass="8451">MRKSFYTWLMTERNPKSNSPKAILADLAFEESAFPKHTDDFDEVSRFLEEHASFSFNLGDFDSIWQEYLEH</sequence>
<reference key="1">
    <citation type="journal article" date="2009" name="J. Bacteriol.">
        <title>Role of conjugative elements in the evolution of the multidrug-resistant pandemic clone Streptococcus pneumoniae Spain23F ST81.</title>
        <authorList>
            <person name="Croucher N.J."/>
            <person name="Walker D."/>
            <person name="Romero P."/>
            <person name="Lennard N."/>
            <person name="Paterson G.K."/>
            <person name="Bason N.C."/>
            <person name="Mitchell A.M."/>
            <person name="Quail M.A."/>
            <person name="Andrew P.W."/>
            <person name="Parkhill J."/>
            <person name="Bentley S.D."/>
            <person name="Mitchell T.J."/>
        </authorList>
    </citation>
    <scope>NUCLEOTIDE SEQUENCE [LARGE SCALE GENOMIC DNA]</scope>
    <source>
        <strain>ATCC 700669 / Spain 23F-1</strain>
    </source>
</reference>